<proteinExistence type="inferred from homology"/>
<protein>
    <recommendedName>
        <fullName evidence="1">Arsenate reductase 1</fullName>
        <ecNumber evidence="1">1.20.4.4</ecNumber>
    </recommendedName>
</protein>
<reference key="1">
    <citation type="journal article" date="2005" name="J. Bacteriol.">
        <title>Insights on evolution of virulence and resistance from the complete genome analysis of an early methicillin-resistant Staphylococcus aureus strain and a biofilm-producing methicillin-resistant Staphylococcus epidermidis strain.</title>
        <authorList>
            <person name="Gill S.R."/>
            <person name="Fouts D.E."/>
            <person name="Archer G.L."/>
            <person name="Mongodin E.F."/>
            <person name="DeBoy R.T."/>
            <person name="Ravel J."/>
            <person name="Paulsen I.T."/>
            <person name="Kolonay J.F."/>
            <person name="Brinkac L.M."/>
            <person name="Beanan M.J."/>
            <person name="Dodson R.J."/>
            <person name="Daugherty S.C."/>
            <person name="Madupu R."/>
            <person name="Angiuoli S.V."/>
            <person name="Durkin A.S."/>
            <person name="Haft D.H."/>
            <person name="Vamathevan J.J."/>
            <person name="Khouri H."/>
            <person name="Utterback T.R."/>
            <person name="Lee C."/>
            <person name="Dimitrov G."/>
            <person name="Jiang L."/>
            <person name="Qin H."/>
            <person name="Weidman J."/>
            <person name="Tran K."/>
            <person name="Kang K.H."/>
            <person name="Hance I.R."/>
            <person name="Nelson K.E."/>
            <person name="Fraser C.M."/>
        </authorList>
    </citation>
    <scope>NUCLEOTIDE SEQUENCE [LARGE SCALE GENOMIC DNA]</scope>
    <source>
        <strain>ATCC 35984 / DSM 28319 / BCRC 17069 / CCUG 31568 / BM 3577 / RP62A</strain>
    </source>
</reference>
<evidence type="ECO:0000255" key="1">
    <source>
        <dbReference type="HAMAP-Rule" id="MF_01624"/>
    </source>
</evidence>
<organism>
    <name type="scientific">Staphylococcus epidermidis (strain ATCC 35984 / DSM 28319 / BCRC 17069 / CCUG 31568 / BM 3577 / RP62A)</name>
    <dbReference type="NCBI Taxonomy" id="176279"/>
    <lineage>
        <taxon>Bacteria</taxon>
        <taxon>Bacillati</taxon>
        <taxon>Bacillota</taxon>
        <taxon>Bacilli</taxon>
        <taxon>Bacillales</taxon>
        <taxon>Staphylococcaceae</taxon>
        <taxon>Staphylococcus</taxon>
    </lineage>
</organism>
<feature type="chain" id="PRO_0000162528" description="Arsenate reductase 1">
    <location>
        <begin position="1"/>
        <end position="132"/>
    </location>
</feature>
<feature type="active site" description="Nucleophile" evidence="1">
    <location>
        <position position="10"/>
    </location>
</feature>
<feature type="active site" description="Nucleophile" evidence="1">
    <location>
        <position position="82"/>
    </location>
</feature>
<feature type="active site" description="Nucleophile" evidence="1">
    <location>
        <position position="89"/>
    </location>
</feature>
<feature type="disulfide bond" description="Redox-active; alternate" evidence="1">
    <location>
        <begin position="10"/>
        <end position="82"/>
    </location>
</feature>
<feature type="disulfide bond" description="Redox-active; alternate" evidence="1">
    <location>
        <begin position="82"/>
        <end position="89"/>
    </location>
</feature>
<keyword id="KW-0059">Arsenical resistance</keyword>
<keyword id="KW-0963">Cytoplasm</keyword>
<keyword id="KW-1015">Disulfide bond</keyword>
<keyword id="KW-0560">Oxidoreductase</keyword>
<keyword id="KW-0676">Redox-active center</keyword>
<keyword id="KW-1185">Reference proteome</keyword>
<comment type="function">
    <text evidence="1">Catalyzes the reduction of arsenate [As(V)] to arsenite [As(III)].</text>
</comment>
<comment type="catalytic activity">
    <reaction evidence="1">
        <text>arsenate + [thioredoxin]-dithiol + H(+) = arsenite + [thioredoxin]-disulfide + H2O</text>
        <dbReference type="Rhea" id="RHEA:43848"/>
        <dbReference type="Rhea" id="RHEA-COMP:10698"/>
        <dbReference type="Rhea" id="RHEA-COMP:10700"/>
        <dbReference type="ChEBI" id="CHEBI:15377"/>
        <dbReference type="ChEBI" id="CHEBI:15378"/>
        <dbReference type="ChEBI" id="CHEBI:29242"/>
        <dbReference type="ChEBI" id="CHEBI:29950"/>
        <dbReference type="ChEBI" id="CHEBI:48597"/>
        <dbReference type="ChEBI" id="CHEBI:50058"/>
        <dbReference type="EC" id="1.20.4.4"/>
    </reaction>
</comment>
<comment type="subcellular location">
    <subcellularLocation>
        <location evidence="1">Cytoplasm</location>
    </subcellularLocation>
</comment>
<comment type="similarity">
    <text evidence="1">Belongs to the low molecular weight phosphotyrosine protein phosphatase family. Thioredoxin-coupled ArsC subfamily.</text>
</comment>
<accession>Q5HRI4</accession>
<gene>
    <name evidence="1" type="primary">arsC1</name>
    <name type="ordered locus">SERP0209</name>
</gene>
<dbReference type="EC" id="1.20.4.4" evidence="1"/>
<dbReference type="EMBL" id="CP000029">
    <property type="protein sequence ID" value="AAW53573.1"/>
    <property type="molecule type" value="Genomic_DNA"/>
</dbReference>
<dbReference type="SMR" id="Q5HRI4"/>
<dbReference type="STRING" id="176279.SERP0209"/>
<dbReference type="KEGG" id="ser:SERP0209"/>
<dbReference type="eggNOG" id="COG0394">
    <property type="taxonomic scope" value="Bacteria"/>
</dbReference>
<dbReference type="HOGENOM" id="CLU_071415_3_2_9"/>
<dbReference type="Proteomes" id="UP000000531">
    <property type="component" value="Chromosome"/>
</dbReference>
<dbReference type="GO" id="GO:0005737">
    <property type="term" value="C:cytoplasm"/>
    <property type="evidence" value="ECO:0007669"/>
    <property type="project" value="UniProtKB-SubCell"/>
</dbReference>
<dbReference type="GO" id="GO:0030612">
    <property type="term" value="F:arsenate reductase (thioredoxin) activity"/>
    <property type="evidence" value="ECO:0007669"/>
    <property type="project" value="UniProtKB-UniRule"/>
</dbReference>
<dbReference type="GO" id="GO:0004725">
    <property type="term" value="F:protein tyrosine phosphatase activity"/>
    <property type="evidence" value="ECO:0007669"/>
    <property type="project" value="InterPro"/>
</dbReference>
<dbReference type="GO" id="GO:0046685">
    <property type="term" value="P:response to arsenic-containing substance"/>
    <property type="evidence" value="ECO:0007669"/>
    <property type="project" value="UniProtKB-KW"/>
</dbReference>
<dbReference type="CDD" id="cd16345">
    <property type="entry name" value="LMWP_ArsC"/>
    <property type="match status" value="1"/>
</dbReference>
<dbReference type="FunFam" id="3.40.50.2300:FF:000237">
    <property type="entry name" value="Arsenate reductase"/>
    <property type="match status" value="1"/>
</dbReference>
<dbReference type="Gene3D" id="3.40.50.2300">
    <property type="match status" value="1"/>
</dbReference>
<dbReference type="HAMAP" id="MF_01624">
    <property type="entry name" value="Arsenate_reduct"/>
    <property type="match status" value="1"/>
</dbReference>
<dbReference type="InterPro" id="IPR014064">
    <property type="entry name" value="Arsenate_reductase_ArsC"/>
</dbReference>
<dbReference type="InterPro" id="IPR023485">
    <property type="entry name" value="Ptyr_pPase"/>
</dbReference>
<dbReference type="InterPro" id="IPR036196">
    <property type="entry name" value="Ptyr_pPase_sf"/>
</dbReference>
<dbReference type="NCBIfam" id="TIGR02691">
    <property type="entry name" value="arsC_pI258_fam"/>
    <property type="match status" value="1"/>
</dbReference>
<dbReference type="NCBIfam" id="NF010053">
    <property type="entry name" value="PRK13530.1"/>
    <property type="match status" value="1"/>
</dbReference>
<dbReference type="PANTHER" id="PTHR43428">
    <property type="entry name" value="ARSENATE REDUCTASE"/>
    <property type="match status" value="1"/>
</dbReference>
<dbReference type="PANTHER" id="PTHR43428:SF1">
    <property type="entry name" value="ARSENATE REDUCTASE"/>
    <property type="match status" value="1"/>
</dbReference>
<dbReference type="Pfam" id="PF01451">
    <property type="entry name" value="LMWPc"/>
    <property type="match status" value="1"/>
</dbReference>
<dbReference type="SMART" id="SM00226">
    <property type="entry name" value="LMWPc"/>
    <property type="match status" value="1"/>
</dbReference>
<dbReference type="SUPFAM" id="SSF52788">
    <property type="entry name" value="Phosphotyrosine protein phosphatases I"/>
    <property type="match status" value="1"/>
</dbReference>
<sequence>MQKKTIYFICTGNSCRSQMAEGFGKLILGDKWNVYSAGIETHGVNPHAIKAMKEVGIDISHHTSDLINNDILIASDIVVTLCSDADANCPVLPKNVTKEHWGFDDPAGKDWSEFQRVRDEIKAAIETFAHRV</sequence>
<name>ARSC1_STAEQ</name>